<reference key="1">
    <citation type="journal article" date="1993" name="Genetics">
        <title>The Drosophila stubarista phenotype is associated with a dosage effect of the putative ribosome-associated protein D-p40 on spineless.</title>
        <authorList>
            <person name="Melnick M.B."/>
            <person name="Noll E."/>
            <person name="Perrimon N."/>
        </authorList>
    </citation>
    <scope>NUCLEOTIDE SEQUENCE [GENOMIC DNA / MRNA]</scope>
    <scope>FUNCTION</scope>
    <scope>DEVELOPMENTAL STAGE</scope>
    <source>
        <tissue>Embryo</tissue>
    </source>
</reference>
<reference key="2">
    <citation type="journal article" date="2000" name="Science">
        <title>The genome sequence of Drosophila melanogaster.</title>
        <authorList>
            <person name="Adams M.D."/>
            <person name="Celniker S.E."/>
            <person name="Holt R.A."/>
            <person name="Evans C.A."/>
            <person name="Gocayne J.D."/>
            <person name="Amanatides P.G."/>
            <person name="Scherer S.E."/>
            <person name="Li P.W."/>
            <person name="Hoskins R.A."/>
            <person name="Galle R.F."/>
            <person name="George R.A."/>
            <person name="Lewis S.E."/>
            <person name="Richards S."/>
            <person name="Ashburner M."/>
            <person name="Henderson S.N."/>
            <person name="Sutton G.G."/>
            <person name="Wortman J.R."/>
            <person name="Yandell M.D."/>
            <person name="Zhang Q."/>
            <person name="Chen L.X."/>
            <person name="Brandon R.C."/>
            <person name="Rogers Y.-H.C."/>
            <person name="Blazej R.G."/>
            <person name="Champe M."/>
            <person name="Pfeiffer B.D."/>
            <person name="Wan K.H."/>
            <person name="Doyle C."/>
            <person name="Baxter E.G."/>
            <person name="Helt G."/>
            <person name="Nelson C.R."/>
            <person name="Miklos G.L.G."/>
            <person name="Abril J.F."/>
            <person name="Agbayani A."/>
            <person name="An H.-J."/>
            <person name="Andrews-Pfannkoch C."/>
            <person name="Baldwin D."/>
            <person name="Ballew R.M."/>
            <person name="Basu A."/>
            <person name="Baxendale J."/>
            <person name="Bayraktaroglu L."/>
            <person name="Beasley E.M."/>
            <person name="Beeson K.Y."/>
            <person name="Benos P.V."/>
            <person name="Berman B.P."/>
            <person name="Bhandari D."/>
            <person name="Bolshakov S."/>
            <person name="Borkova D."/>
            <person name="Botchan M.R."/>
            <person name="Bouck J."/>
            <person name="Brokstein P."/>
            <person name="Brottier P."/>
            <person name="Burtis K.C."/>
            <person name="Busam D.A."/>
            <person name="Butler H."/>
            <person name="Cadieu E."/>
            <person name="Center A."/>
            <person name="Chandra I."/>
            <person name="Cherry J.M."/>
            <person name="Cawley S."/>
            <person name="Dahlke C."/>
            <person name="Davenport L.B."/>
            <person name="Davies P."/>
            <person name="de Pablos B."/>
            <person name="Delcher A."/>
            <person name="Deng Z."/>
            <person name="Mays A.D."/>
            <person name="Dew I."/>
            <person name="Dietz S.M."/>
            <person name="Dodson K."/>
            <person name="Doup L.E."/>
            <person name="Downes M."/>
            <person name="Dugan-Rocha S."/>
            <person name="Dunkov B.C."/>
            <person name="Dunn P."/>
            <person name="Durbin K.J."/>
            <person name="Evangelista C.C."/>
            <person name="Ferraz C."/>
            <person name="Ferriera S."/>
            <person name="Fleischmann W."/>
            <person name="Fosler C."/>
            <person name="Gabrielian A.E."/>
            <person name="Garg N.S."/>
            <person name="Gelbart W.M."/>
            <person name="Glasser K."/>
            <person name="Glodek A."/>
            <person name="Gong F."/>
            <person name="Gorrell J.H."/>
            <person name="Gu Z."/>
            <person name="Guan P."/>
            <person name="Harris M."/>
            <person name="Harris N.L."/>
            <person name="Harvey D.A."/>
            <person name="Heiman T.J."/>
            <person name="Hernandez J.R."/>
            <person name="Houck J."/>
            <person name="Hostin D."/>
            <person name="Houston K.A."/>
            <person name="Howland T.J."/>
            <person name="Wei M.-H."/>
            <person name="Ibegwam C."/>
            <person name="Jalali M."/>
            <person name="Kalush F."/>
            <person name="Karpen G.H."/>
            <person name="Ke Z."/>
            <person name="Kennison J.A."/>
            <person name="Ketchum K.A."/>
            <person name="Kimmel B.E."/>
            <person name="Kodira C.D."/>
            <person name="Kraft C.L."/>
            <person name="Kravitz S."/>
            <person name="Kulp D."/>
            <person name="Lai Z."/>
            <person name="Lasko P."/>
            <person name="Lei Y."/>
            <person name="Levitsky A.A."/>
            <person name="Li J.H."/>
            <person name="Li Z."/>
            <person name="Liang Y."/>
            <person name="Lin X."/>
            <person name="Liu X."/>
            <person name="Mattei B."/>
            <person name="McIntosh T.C."/>
            <person name="McLeod M.P."/>
            <person name="McPherson D."/>
            <person name="Merkulov G."/>
            <person name="Milshina N.V."/>
            <person name="Mobarry C."/>
            <person name="Morris J."/>
            <person name="Moshrefi A."/>
            <person name="Mount S.M."/>
            <person name="Moy M."/>
            <person name="Murphy B."/>
            <person name="Murphy L."/>
            <person name="Muzny D.M."/>
            <person name="Nelson D.L."/>
            <person name="Nelson D.R."/>
            <person name="Nelson K.A."/>
            <person name="Nixon K."/>
            <person name="Nusskern D.R."/>
            <person name="Pacleb J.M."/>
            <person name="Palazzolo M."/>
            <person name="Pittman G.S."/>
            <person name="Pan S."/>
            <person name="Pollard J."/>
            <person name="Puri V."/>
            <person name="Reese M.G."/>
            <person name="Reinert K."/>
            <person name="Remington K."/>
            <person name="Saunders R.D.C."/>
            <person name="Scheeler F."/>
            <person name="Shen H."/>
            <person name="Shue B.C."/>
            <person name="Siden-Kiamos I."/>
            <person name="Simpson M."/>
            <person name="Skupski M.P."/>
            <person name="Smith T.J."/>
            <person name="Spier E."/>
            <person name="Spradling A.C."/>
            <person name="Stapleton M."/>
            <person name="Strong R."/>
            <person name="Sun E."/>
            <person name="Svirskas R."/>
            <person name="Tector C."/>
            <person name="Turner R."/>
            <person name="Venter E."/>
            <person name="Wang A.H."/>
            <person name="Wang X."/>
            <person name="Wang Z.-Y."/>
            <person name="Wassarman D.A."/>
            <person name="Weinstock G.M."/>
            <person name="Weissenbach J."/>
            <person name="Williams S.M."/>
            <person name="Woodage T."/>
            <person name="Worley K.C."/>
            <person name="Wu D."/>
            <person name="Yang S."/>
            <person name="Yao Q.A."/>
            <person name="Ye J."/>
            <person name="Yeh R.-F."/>
            <person name="Zaveri J.S."/>
            <person name="Zhan M."/>
            <person name="Zhang G."/>
            <person name="Zhao Q."/>
            <person name="Zheng L."/>
            <person name="Zheng X.H."/>
            <person name="Zhong F.N."/>
            <person name="Zhong W."/>
            <person name="Zhou X."/>
            <person name="Zhu S.C."/>
            <person name="Zhu X."/>
            <person name="Smith H.O."/>
            <person name="Gibbs R.A."/>
            <person name="Myers E.W."/>
            <person name="Rubin G.M."/>
            <person name="Venter J.C."/>
        </authorList>
    </citation>
    <scope>NUCLEOTIDE SEQUENCE [LARGE SCALE GENOMIC DNA]</scope>
    <source>
        <strain>Berkeley</strain>
    </source>
</reference>
<reference key="3">
    <citation type="journal article" date="2002" name="Genome Biol.">
        <title>Annotation of the Drosophila melanogaster euchromatic genome: a systematic review.</title>
        <authorList>
            <person name="Misra S."/>
            <person name="Crosby M.A."/>
            <person name="Mungall C.J."/>
            <person name="Matthews B.B."/>
            <person name="Campbell K.S."/>
            <person name="Hradecky P."/>
            <person name="Huang Y."/>
            <person name="Kaminker J.S."/>
            <person name="Millburn G.H."/>
            <person name="Prochnik S.E."/>
            <person name="Smith C.D."/>
            <person name="Tupy J.L."/>
            <person name="Whitfield E.J."/>
            <person name="Bayraktaroglu L."/>
            <person name="Berman B.P."/>
            <person name="Bettencourt B.R."/>
            <person name="Celniker S.E."/>
            <person name="de Grey A.D.N.J."/>
            <person name="Drysdale R.A."/>
            <person name="Harris N.L."/>
            <person name="Richter J."/>
            <person name="Russo S."/>
            <person name="Schroeder A.J."/>
            <person name="Shu S.Q."/>
            <person name="Stapleton M."/>
            <person name="Yamada C."/>
            <person name="Ashburner M."/>
            <person name="Gelbart W.M."/>
            <person name="Rubin G.M."/>
            <person name="Lewis S.E."/>
        </authorList>
    </citation>
    <scope>GENOME REANNOTATION</scope>
    <scope>ALTERNATIVE SPLICING</scope>
    <source>
        <strain>Berkeley</strain>
    </source>
</reference>
<reference key="4">
    <citation type="journal article" date="2000" name="Science">
        <title>From sequence to chromosome: the tip of the X chromosome of D. melanogaster.</title>
        <authorList>
            <person name="Benos P.V."/>
            <person name="Gatt M.K."/>
            <person name="Ashburner M."/>
            <person name="Murphy L."/>
            <person name="Harris D."/>
            <person name="Barrell B.G."/>
            <person name="Ferraz C."/>
            <person name="Vidal S."/>
            <person name="Brun C."/>
            <person name="Demailles J."/>
            <person name="Cadieu E."/>
            <person name="Dreano S."/>
            <person name="Gloux S."/>
            <person name="Lelaure V."/>
            <person name="Mottier S."/>
            <person name="Galibert F."/>
            <person name="Borkova D."/>
            <person name="Minana B."/>
            <person name="Kafatos F.C."/>
            <person name="Louis C."/>
            <person name="Siden-Kiamos I."/>
            <person name="Bolshakov S."/>
            <person name="Papagiannakis G."/>
            <person name="Spanos L."/>
            <person name="Cox S."/>
            <person name="Madueno E."/>
            <person name="de Pablos B."/>
            <person name="Modolell J."/>
            <person name="Peter A."/>
            <person name="Schoettler P."/>
            <person name="Werner M."/>
            <person name="Mourkioti F."/>
            <person name="Beinert N."/>
            <person name="Dowe G."/>
            <person name="Schaefer U."/>
            <person name="Jaeckle H."/>
            <person name="Bucheton A."/>
            <person name="Callister D.M."/>
            <person name="Campbell L.A."/>
            <person name="Darlamitsou A."/>
            <person name="Henderson N.S."/>
            <person name="McMillan P.J."/>
            <person name="Salles C."/>
            <person name="Tait E.A."/>
            <person name="Valenti P."/>
            <person name="Saunders R.D.C."/>
            <person name="Glover D.M."/>
        </authorList>
    </citation>
    <scope>NUCLEOTIDE SEQUENCE [LARGE SCALE GENOMIC DNA]</scope>
    <source>
        <strain>Oregon-R</strain>
    </source>
</reference>
<reference key="5">
    <citation type="journal article" date="2002" name="Genome Biol.">
        <title>A Drosophila full-length cDNA resource.</title>
        <authorList>
            <person name="Stapleton M."/>
            <person name="Carlson J.W."/>
            <person name="Brokstein P."/>
            <person name="Yu C."/>
            <person name="Champe M."/>
            <person name="George R.A."/>
            <person name="Guarin H."/>
            <person name="Kronmiller B."/>
            <person name="Pacleb J.M."/>
            <person name="Park S."/>
            <person name="Wan K.H."/>
            <person name="Rubin G.M."/>
            <person name="Celniker S.E."/>
        </authorList>
    </citation>
    <scope>NUCLEOTIDE SEQUENCE [LARGE SCALE MRNA]</scope>
    <source>
        <strain>Berkeley</strain>
        <tissue>Embryo</tissue>
    </source>
</reference>
<reference key="6">
    <citation type="submission" date="2006-10" db="EMBL/GenBank/DDBJ databases">
        <authorList>
            <person name="Stapleton M."/>
            <person name="Carlson J.W."/>
            <person name="Frise E."/>
            <person name="Kapadia B."/>
            <person name="Park S."/>
            <person name="Wan K.H."/>
            <person name="Yu C."/>
            <person name="Celniker S.E."/>
        </authorList>
    </citation>
    <scope>NUCLEOTIDE SEQUENCE [LARGE SCALE MRNA]</scope>
    <source>
        <strain>Berkeley</strain>
    </source>
</reference>
<reference key="7">
    <citation type="submission" date="1991-10" db="EMBL/GenBank/DDBJ databases">
        <title>A mammalian laminin receptor homolog from Drosophila.</title>
        <authorList>
            <person name="Kim Y.J."/>
            <person name="Baker B.S."/>
        </authorList>
    </citation>
    <scope>NUCLEOTIDE SEQUENCE [MRNA] OF 2-270</scope>
    <source>
        <strain>Canton-S</strain>
    </source>
</reference>
<reference key="8">
    <citation type="journal article" date="1999" name="Mol. Cell. Biol.">
        <title>Down-regulation of RpS21, a putative translation initiation factor interacting with P40, produces viable minute imagos and larval lethality with overgrown hematopoietic organs and imaginal discs.</title>
        <authorList>
            <person name="Toeroek I."/>
            <person name="Herrmann-Horle D."/>
            <person name="Kiss I."/>
            <person name="Tick G."/>
            <person name="Speer G."/>
            <person name="Schmitt R."/>
            <person name="Mechler B.M."/>
        </authorList>
    </citation>
    <scope>INTERACTION WITH RPS21</scope>
</reference>
<reference key="9">
    <citation type="journal article" date="2002" name="Mol. Cell">
        <title>Ribosome components are associated with sites of transcription.</title>
        <authorList>
            <person name="Brogna S."/>
            <person name="Sato T."/>
            <person name="Rosbash M."/>
        </authorList>
    </citation>
    <scope>SUBCELLULAR LOCATION</scope>
</reference>
<reference key="10">
    <citation type="journal article" date="2002" name="Mol. Cell">
        <authorList>
            <person name="Brogna S."/>
            <person name="Sato T."/>
            <person name="Rosbash M."/>
        </authorList>
    </citation>
    <scope>ERRATUM OF PUBMED:12150910</scope>
</reference>
<reference key="11">
    <citation type="journal article" date="2013" name="Nature">
        <title>Structures of the human and Drosophila 80S ribosome.</title>
        <authorList>
            <person name="Anger A.M."/>
            <person name="Armache J.P."/>
            <person name="Berninghausen O."/>
            <person name="Habeck M."/>
            <person name="Subklewe M."/>
            <person name="Wilson D.N."/>
            <person name="Beckmann R."/>
        </authorList>
    </citation>
    <scope>STRUCTURE BY ELECTRON MICROSCOPY (6.0 ANGSTROMS) OF THE 80S RIBOSOME</scope>
</reference>
<organism>
    <name type="scientific">Drosophila melanogaster</name>
    <name type="common">Fruit fly</name>
    <dbReference type="NCBI Taxonomy" id="7227"/>
    <lineage>
        <taxon>Eukaryota</taxon>
        <taxon>Metazoa</taxon>
        <taxon>Ecdysozoa</taxon>
        <taxon>Arthropoda</taxon>
        <taxon>Hexapoda</taxon>
        <taxon>Insecta</taxon>
        <taxon>Pterygota</taxon>
        <taxon>Neoptera</taxon>
        <taxon>Endopterygota</taxon>
        <taxon>Diptera</taxon>
        <taxon>Brachycera</taxon>
        <taxon>Muscomorpha</taxon>
        <taxon>Ephydroidea</taxon>
        <taxon>Drosophilidae</taxon>
        <taxon>Drosophila</taxon>
        <taxon>Sophophora</taxon>
    </lineage>
</organism>
<protein>
    <recommendedName>
        <fullName evidence="1">Small ribosomal subunit protein uS2</fullName>
    </recommendedName>
    <alternativeName>
        <fullName evidence="6">40S ribosomal protein SA</fullName>
    </alternativeName>
    <alternativeName>
        <fullName>K14</fullName>
    </alternativeName>
    <alternativeName>
        <fullName>Laminin receptor homolog</fullName>
    </alternativeName>
    <alternativeName>
        <fullName evidence="1">Protein stubarista</fullName>
    </alternativeName>
</protein>
<evidence type="ECO:0000255" key="1">
    <source>
        <dbReference type="HAMAP-Rule" id="MF_03015"/>
    </source>
</evidence>
<evidence type="ECO:0000256" key="2">
    <source>
        <dbReference type="SAM" id="MobiDB-lite"/>
    </source>
</evidence>
<evidence type="ECO:0000269" key="3">
    <source>
    </source>
</evidence>
<evidence type="ECO:0000269" key="4">
    <source>
    </source>
</evidence>
<evidence type="ECO:0000269" key="5">
    <source>
    </source>
</evidence>
<evidence type="ECO:0000305" key="6"/>
<dbReference type="EMBL" id="M90422">
    <property type="protein sequence ID" value="AAA28741.1"/>
    <property type="molecule type" value="Genomic_DNA"/>
</dbReference>
<dbReference type="EMBL" id="AE014298">
    <property type="protein sequence ID" value="AAF45638.2"/>
    <property type="molecule type" value="Genomic_DNA"/>
</dbReference>
<dbReference type="EMBL" id="AE014298">
    <property type="protein sequence ID" value="AAN09049.1"/>
    <property type="molecule type" value="Genomic_DNA"/>
</dbReference>
<dbReference type="EMBL" id="AE014298">
    <property type="protein sequence ID" value="AAN09050.3"/>
    <property type="molecule type" value="Genomic_DNA"/>
</dbReference>
<dbReference type="EMBL" id="AL031027">
    <property type="protein sequence ID" value="CAA19839.1"/>
    <property type="molecule type" value="Genomic_DNA"/>
</dbReference>
<dbReference type="EMBL" id="AE014298">
    <property type="protein sequence ID" value="AHN59256.1"/>
    <property type="molecule type" value="Genomic_DNA"/>
</dbReference>
<dbReference type="EMBL" id="AY118899">
    <property type="protein sequence ID" value="AAM50759.1"/>
    <property type="molecule type" value="mRNA"/>
</dbReference>
<dbReference type="EMBL" id="BT029094">
    <property type="protein sequence ID" value="ABJ17027.1"/>
    <property type="molecule type" value="mRNA"/>
</dbReference>
<dbReference type="EMBL" id="M77133">
    <property type="protein sequence ID" value="AAA28667.1"/>
    <property type="status" value="ALT_INIT"/>
    <property type="molecule type" value="mRNA"/>
</dbReference>
<dbReference type="PIR" id="T13602">
    <property type="entry name" value="T13602"/>
</dbReference>
<dbReference type="RefSeq" id="NP_001284785.1">
    <property type="nucleotide sequence ID" value="NM_001297856.1"/>
</dbReference>
<dbReference type="RefSeq" id="NP_476750.1">
    <property type="nucleotide sequence ID" value="NM_057402.5"/>
</dbReference>
<dbReference type="RefSeq" id="NP_726744.1">
    <property type="nucleotide sequence ID" value="NM_166889.2"/>
</dbReference>
<dbReference type="RefSeq" id="NP_726745.3">
    <property type="nucleotide sequence ID" value="NM_166890.3"/>
</dbReference>
<dbReference type="PDB" id="4V6W">
    <property type="method" value="EM"/>
    <property type="resolution" value="6.00 A"/>
    <property type="chains" value="AA=1-270"/>
</dbReference>
<dbReference type="PDB" id="6XU6">
    <property type="method" value="EM"/>
    <property type="resolution" value="3.50 A"/>
    <property type="chains" value="AA=6-223"/>
</dbReference>
<dbReference type="PDB" id="6XU7">
    <property type="method" value="EM"/>
    <property type="resolution" value="4.90 A"/>
    <property type="chains" value="AA=6-223"/>
</dbReference>
<dbReference type="PDB" id="6XU8">
    <property type="method" value="EM"/>
    <property type="resolution" value="3.00 A"/>
    <property type="chains" value="AA=6-223"/>
</dbReference>
<dbReference type="PDBsum" id="4V6W"/>
<dbReference type="PDBsum" id="6XU6"/>
<dbReference type="PDBsum" id="6XU7"/>
<dbReference type="PDBsum" id="6XU8"/>
<dbReference type="EMDB" id="EMD-10622"/>
<dbReference type="EMDB" id="EMD-10623"/>
<dbReference type="EMDB" id="EMD-10624"/>
<dbReference type="SMR" id="P38979"/>
<dbReference type="BioGRID" id="57663">
    <property type="interactions" value="110"/>
</dbReference>
<dbReference type="DIP" id="DIP-17178N"/>
<dbReference type="FunCoup" id="P38979">
    <property type="interactions" value="1310"/>
</dbReference>
<dbReference type="IntAct" id="P38979">
    <property type="interactions" value="4"/>
</dbReference>
<dbReference type="MINT" id="P38979"/>
<dbReference type="STRING" id="7227.FBpp0070277"/>
<dbReference type="PaxDb" id="7227-FBpp0070279"/>
<dbReference type="DNASU" id="31106"/>
<dbReference type="EnsemblMetazoa" id="FBtr0070289">
    <property type="protein sequence ID" value="FBpp0070277"/>
    <property type="gene ID" value="FBgn0003517"/>
</dbReference>
<dbReference type="EnsemblMetazoa" id="FBtr0070290">
    <property type="protein sequence ID" value="FBpp0070278"/>
    <property type="gene ID" value="FBgn0003517"/>
</dbReference>
<dbReference type="EnsemblMetazoa" id="FBtr0339593">
    <property type="protein sequence ID" value="FBpp0308665"/>
    <property type="gene ID" value="FBgn0003517"/>
</dbReference>
<dbReference type="EnsemblMetazoa" id="FBtr0339594">
    <property type="protein sequence ID" value="FBpp0308666"/>
    <property type="gene ID" value="FBgn0003517"/>
</dbReference>
<dbReference type="GeneID" id="31106"/>
<dbReference type="KEGG" id="dme:Dmel_CG14792"/>
<dbReference type="AGR" id="FB:FBgn0003517"/>
<dbReference type="CTD" id="104044"/>
<dbReference type="FlyBase" id="FBgn0003517">
    <property type="gene designation" value="sta"/>
</dbReference>
<dbReference type="VEuPathDB" id="VectorBase:FBgn0003517"/>
<dbReference type="eggNOG" id="KOG0830">
    <property type="taxonomic scope" value="Eukaryota"/>
</dbReference>
<dbReference type="GeneTree" id="ENSGT00950000183099"/>
<dbReference type="HOGENOM" id="CLU_058171_1_0_1"/>
<dbReference type="InParanoid" id="P38979"/>
<dbReference type="OMA" id="VKNFFEP"/>
<dbReference type="OrthoDB" id="414863at2759"/>
<dbReference type="PhylomeDB" id="P38979"/>
<dbReference type="Reactome" id="R-DME-156827">
    <property type="pathway name" value="L13a-mediated translational silencing of Ceruloplasmin expression"/>
</dbReference>
<dbReference type="Reactome" id="R-DME-1799339">
    <property type="pathway name" value="SRP-dependent cotranslational protein targeting to membrane"/>
</dbReference>
<dbReference type="Reactome" id="R-DME-72649">
    <property type="pathway name" value="Translation initiation complex formation"/>
</dbReference>
<dbReference type="Reactome" id="R-DME-72689">
    <property type="pathway name" value="Formation of a pool of free 40S subunits"/>
</dbReference>
<dbReference type="Reactome" id="R-DME-72695">
    <property type="pathway name" value="Formation of the ternary complex, and subsequently, the 43S complex"/>
</dbReference>
<dbReference type="Reactome" id="R-DME-72702">
    <property type="pathway name" value="Ribosomal scanning and start codon recognition"/>
</dbReference>
<dbReference type="Reactome" id="R-DME-72706">
    <property type="pathway name" value="GTP hydrolysis and joining of the 60S ribosomal subunit"/>
</dbReference>
<dbReference type="Reactome" id="R-DME-975956">
    <property type="pathway name" value="Nonsense Mediated Decay (NMD) independent of the Exon Junction Complex (EJC)"/>
</dbReference>
<dbReference type="Reactome" id="R-DME-975957">
    <property type="pathway name" value="Nonsense Mediated Decay (NMD) enhanced by the Exon Junction Complex (EJC)"/>
</dbReference>
<dbReference type="SignaLink" id="P38979"/>
<dbReference type="BioGRID-ORCS" id="31106">
    <property type="hits" value="1 hit in 1 CRISPR screen"/>
</dbReference>
<dbReference type="ChiTaRS" id="sta">
    <property type="organism name" value="fly"/>
</dbReference>
<dbReference type="GenomeRNAi" id="31106"/>
<dbReference type="PRO" id="PR:P38979"/>
<dbReference type="Proteomes" id="UP000000803">
    <property type="component" value="Chromosome X"/>
</dbReference>
<dbReference type="Bgee" id="FBgn0003517">
    <property type="expression patterns" value="Expressed in adult enteroendocrine precursor cell in adult midgut (Drosophila) and 280 other cell types or tissues"/>
</dbReference>
<dbReference type="ExpressionAtlas" id="P38979">
    <property type="expression patterns" value="baseline and differential"/>
</dbReference>
<dbReference type="GO" id="GO:0022626">
    <property type="term" value="C:cytosolic ribosome"/>
    <property type="evidence" value="ECO:0000314"/>
    <property type="project" value="FlyBase"/>
</dbReference>
<dbReference type="GO" id="GO:0022627">
    <property type="term" value="C:cytosolic small ribosomal subunit"/>
    <property type="evidence" value="ECO:0000318"/>
    <property type="project" value="GO_Central"/>
</dbReference>
<dbReference type="GO" id="GO:0005634">
    <property type="term" value="C:nucleus"/>
    <property type="evidence" value="ECO:0007669"/>
    <property type="project" value="UniProtKB-SubCell"/>
</dbReference>
<dbReference type="GO" id="GO:0005840">
    <property type="term" value="C:ribosome"/>
    <property type="evidence" value="ECO:0000314"/>
    <property type="project" value="FlyBase"/>
</dbReference>
<dbReference type="GO" id="GO:0043022">
    <property type="term" value="F:ribosome binding"/>
    <property type="evidence" value="ECO:0000353"/>
    <property type="project" value="UniProtKB"/>
</dbReference>
<dbReference type="GO" id="GO:0003735">
    <property type="term" value="F:structural constituent of ribosome"/>
    <property type="evidence" value="ECO:0000314"/>
    <property type="project" value="FlyBase"/>
</dbReference>
<dbReference type="GO" id="GO:0002181">
    <property type="term" value="P:cytoplasmic translation"/>
    <property type="evidence" value="ECO:0000318"/>
    <property type="project" value="GO_Central"/>
</dbReference>
<dbReference type="GO" id="GO:0000028">
    <property type="term" value="P:ribosomal small subunit assembly"/>
    <property type="evidence" value="ECO:0000318"/>
    <property type="project" value="GO_Central"/>
</dbReference>
<dbReference type="CDD" id="cd01425">
    <property type="entry name" value="RPS2"/>
    <property type="match status" value="1"/>
</dbReference>
<dbReference type="FunFam" id="3.40.50.10490:FF:000012">
    <property type="entry name" value="40S ribosomal protein SA"/>
    <property type="match status" value="1"/>
</dbReference>
<dbReference type="Gene3D" id="3.40.50.10490">
    <property type="entry name" value="Glucose-6-phosphate isomerase like protein, domain 1"/>
    <property type="match status" value="1"/>
</dbReference>
<dbReference type="HAMAP" id="MF_03015">
    <property type="entry name" value="Ribosomal_S2_euk"/>
    <property type="match status" value="1"/>
</dbReference>
<dbReference type="InterPro" id="IPR001865">
    <property type="entry name" value="Ribosomal_uS2"/>
</dbReference>
<dbReference type="InterPro" id="IPR032281">
    <property type="entry name" value="Ribosomal_uS2_C"/>
</dbReference>
<dbReference type="InterPro" id="IPR018130">
    <property type="entry name" value="Ribosomal_uS2_CS"/>
</dbReference>
<dbReference type="InterPro" id="IPR027498">
    <property type="entry name" value="Ribosomal_uS2_euk"/>
</dbReference>
<dbReference type="InterPro" id="IPR005707">
    <property type="entry name" value="Ribosomal_uS2_euk/arc"/>
</dbReference>
<dbReference type="InterPro" id="IPR023591">
    <property type="entry name" value="Ribosomal_uS2_flav_dom_sf"/>
</dbReference>
<dbReference type="NCBIfam" id="TIGR01012">
    <property type="entry name" value="uS2_euk_arch"/>
    <property type="match status" value="1"/>
</dbReference>
<dbReference type="PANTHER" id="PTHR11489">
    <property type="entry name" value="40S RIBOSOMAL PROTEIN SA"/>
    <property type="match status" value="1"/>
</dbReference>
<dbReference type="Pfam" id="PF16122">
    <property type="entry name" value="40S_SA_C"/>
    <property type="match status" value="1"/>
</dbReference>
<dbReference type="Pfam" id="PF00318">
    <property type="entry name" value="Ribosomal_S2"/>
    <property type="match status" value="2"/>
</dbReference>
<dbReference type="PRINTS" id="PR00395">
    <property type="entry name" value="RIBOSOMALS2"/>
</dbReference>
<dbReference type="SUPFAM" id="SSF52313">
    <property type="entry name" value="Ribosomal protein S2"/>
    <property type="match status" value="1"/>
</dbReference>
<dbReference type="PROSITE" id="PS00962">
    <property type="entry name" value="RIBOSOMAL_S2_1"/>
    <property type="match status" value="1"/>
</dbReference>
<dbReference type="PROSITE" id="PS00963">
    <property type="entry name" value="RIBOSOMAL_S2_2"/>
    <property type="match status" value="1"/>
</dbReference>
<keyword id="KW-0002">3D-structure</keyword>
<keyword id="KW-0963">Cytoplasm</keyword>
<keyword id="KW-0217">Developmental protein</keyword>
<keyword id="KW-0539">Nucleus</keyword>
<keyword id="KW-1185">Reference proteome</keyword>
<keyword id="KW-0687">Ribonucleoprotein</keyword>
<keyword id="KW-0689">Ribosomal protein</keyword>
<proteinExistence type="evidence at protein level"/>
<sequence>MSGGLDILSLKEDDITKMLVATTHLGSENVNFQMEQYVYKRRADGVNILNLGKTWEKLQLAARAIVAIDNPSDIFVISSRPIGQRAVLKFAKYTDTTPIAGRFTPGAFTNQIQPAFREPRLLVVTDPNTDHQPIMEASYVNIPVIAFTNTDSPLRYIDIAIPCNNKSAHSIGLMWWLLAREVLRLRGTISRSVEWPVVVDLFFYRDPEEAEKEEAAAKELLPPPKIEEAVDHPVEETTNWADEVAAETVGGVEDWNEDTVKTSWGSDGQF</sequence>
<name>RSSA_DROME</name>
<gene>
    <name evidence="1" type="primary">sta</name>
    <name type="ORF">CG14792</name>
</gene>
<accession>P38979</accession>
<accession>Q058X4</accession>
<accession>Q7KW10</accession>
<accession>Q9W583</accession>
<accession>X2JC80</accession>
<feature type="chain" id="PRO_0000134353" description="Small ribosomal subunit protein uS2">
    <location>
        <begin position="1"/>
        <end position="270"/>
    </location>
</feature>
<feature type="region of interest" description="Disordered" evidence="2">
    <location>
        <begin position="251"/>
        <end position="270"/>
    </location>
</feature>
<feature type="compositionally biased region" description="Polar residues" evidence="2">
    <location>
        <begin position="261"/>
        <end position="270"/>
    </location>
</feature>
<comment type="function">
    <text evidence="1 5">Required for the assembly and/or stability of the 40S ribosomal subunit. Required for the processing of the 20S rRNA-precursor to mature 18S rRNA in a late step of the maturation of 40S ribosomal subunits. Required during oogenesis and imaginal development.</text>
</comment>
<comment type="subunit">
    <text evidence="1 3">Component of the small ribosomal subunit. Mature ribosomes consist of a small (40S) and a large (60S) subunit. The 40S subunit contains about 33 different proteins and 1 molecule of RNA (18S). The 60S subunit contains about 49 different proteins and 3 molecules of RNA (28S, 5.8S and 5S). Interacts with oho23B/rpS21.</text>
</comment>
<comment type="subcellular location">
    <subcellularLocation>
        <location evidence="1 4">Cytoplasm</location>
    </subcellularLocation>
    <subcellularLocation>
        <location evidence="1 4">Nucleus</location>
    </subcellularLocation>
    <text>May associate with nascent RNP complexes within the nucleus.</text>
</comment>
<comment type="developmental stage">
    <text evidence="5">Expressed both maternally and zygotically in embryos.</text>
</comment>
<comment type="similarity">
    <text evidence="1">Belongs to the universal ribosomal protein uS2 family.</text>
</comment>
<comment type="caution">
    <text evidence="6">Was originally thought to be a laminin receptor.</text>
</comment>
<comment type="sequence caution" evidence="6">
    <conflict type="erroneous initiation">
        <sequence resource="EMBL-CDS" id="AAA28667"/>
    </conflict>
    <text>Truncated N-terminus.</text>
</comment>